<protein>
    <recommendedName>
        <fullName>Alkaline phosphatase 4</fullName>
        <ecNumber>3.1.3.1</ecNumber>
    </recommendedName>
    <alternativeName>
        <fullName>Alkaline phosphatase IV</fullName>
        <shortName>APase IV</shortName>
    </alternativeName>
</protein>
<proteinExistence type="evidence at protein level"/>
<feature type="signal peptide" evidence="3">
    <location>
        <begin position="1"/>
        <end position="41"/>
    </location>
</feature>
<feature type="chain" id="PRO_0000024011" description="Alkaline phosphatase 4">
    <location>
        <begin position="42"/>
        <end position="461"/>
    </location>
</feature>
<feature type="active site" description="Phosphoserine intermediate" evidence="2">
    <location>
        <position position="108"/>
    </location>
</feature>
<feature type="binding site" evidence="1">
    <location>
        <position position="58"/>
    </location>
    <ligand>
        <name>Mg(2+)</name>
        <dbReference type="ChEBI" id="CHEBI:18420"/>
    </ligand>
</feature>
<feature type="binding site" evidence="1">
    <location>
        <position position="58"/>
    </location>
    <ligand>
        <name>Zn(2+)</name>
        <dbReference type="ChEBI" id="CHEBI:29105"/>
        <label>2</label>
    </ligand>
</feature>
<feature type="binding site" evidence="1">
    <location>
        <position position="161"/>
    </location>
    <ligand>
        <name>Mg(2+)</name>
        <dbReference type="ChEBI" id="CHEBI:18420"/>
    </ligand>
</feature>
<feature type="binding site" evidence="1">
    <location>
        <position position="282"/>
    </location>
    <ligand>
        <name>Mg(2+)</name>
        <dbReference type="ChEBI" id="CHEBI:18420"/>
    </ligand>
</feature>
<feature type="binding site" evidence="1">
    <location>
        <position position="287"/>
    </location>
    <ligand>
        <name>Zn(2+)</name>
        <dbReference type="ChEBI" id="CHEBI:29105"/>
        <label>1</label>
    </ligand>
</feature>
<feature type="binding site" evidence="1">
    <location>
        <position position="291"/>
    </location>
    <ligand>
        <name>Zn(2+)</name>
        <dbReference type="ChEBI" id="CHEBI:29105"/>
        <label>1</label>
    </ligand>
</feature>
<feature type="binding site" evidence="1">
    <location>
        <position position="329"/>
    </location>
    <ligand>
        <name>Zn(2+)</name>
        <dbReference type="ChEBI" id="CHEBI:29105"/>
        <label>2</label>
    </ligand>
</feature>
<feature type="binding site" evidence="1">
    <location>
        <position position="330"/>
    </location>
    <ligand>
        <name>Zn(2+)</name>
        <dbReference type="ChEBI" id="CHEBI:29105"/>
        <label>2</label>
    </ligand>
</feature>
<feature type="binding site" evidence="1">
    <location>
        <position position="423"/>
    </location>
    <ligand>
        <name>Zn(2+)</name>
        <dbReference type="ChEBI" id="CHEBI:29105"/>
        <label>1</label>
    </ligand>
</feature>
<feature type="sequence conflict" description="In Ref. 7; AA sequence." evidence="4" ref="7">
    <original>R</original>
    <variation>K</variation>
    <location>
        <position position="50"/>
    </location>
</feature>
<feature type="sequence conflict" description="In Ref. 1; AAA18323, 2; CAA74486 and 5." evidence="4" ref="1 2 5">
    <original>D</original>
    <variation>N</variation>
    <location>
        <position position="208"/>
    </location>
</feature>
<keyword id="KW-0903">Direct protein sequencing</keyword>
<keyword id="KW-0378">Hydrolase</keyword>
<keyword id="KW-0460">Magnesium</keyword>
<keyword id="KW-0479">Metal-binding</keyword>
<keyword id="KW-0597">Phosphoprotein</keyword>
<keyword id="KW-1185">Reference proteome</keyword>
<keyword id="KW-0732">Signal</keyword>
<keyword id="KW-0862">Zinc</keyword>
<sequence>MKKMSLFQNMKSKLLPIAAVSVLTAGIFAGAELQQTEKASAKKQDKAEIRNVIVMIGDGMGTPYIRAYRSMKNNGDTPNNPKLTEFDRNLTGMMMTHPDDPDYNITDSAAAGTALATGVKTYNNAIGVDKNGKKVKSVLEEAKQQGKSTGLVATSEINHATPAAYGAHNESRKNMDQIANSYMDDKIKGKHKIDVLLGGGKSYFNRKDRNLTKEFKQAGYSYVTTKQALKKNKDQQVLGLFADGGLAKALDRDSKTPSLKDMTVSAIDRLNQNKKGFFLMVEGSQIDWAAHDNDTVGAMSEVKDFEQAYKAAIEFAKKDKHTLVIATADHTTGGFTIGANGEKNWHAEPILSAKKTPEFMAKKISEGKPVKDVLARYANLKVTSEEIKSVEAAAQADKSKGASKAIIKIFNTRSNSGWTSTDHTGEEVPVYAYGPGKEKFRGLINNTDQANIIFKILKTGK</sequence>
<gene>
    <name type="primary">phoA</name>
    <name type="synonym">phoAIV</name>
    <name type="ordered locus">BSU09410</name>
</gene>
<name>PPB4_BACSU</name>
<dbReference type="EC" id="3.1.3.1"/>
<dbReference type="EMBL" id="U02550">
    <property type="protein sequence ID" value="AAA18323.1"/>
    <property type="molecule type" value="Unassigned_DNA"/>
</dbReference>
<dbReference type="EMBL" id="Y14082">
    <property type="protein sequence ID" value="CAA74486.1"/>
    <property type="molecule type" value="Genomic_DNA"/>
</dbReference>
<dbReference type="EMBL" id="AL009126">
    <property type="protein sequence ID" value="CAB12780.2"/>
    <property type="molecule type" value="Genomic_DNA"/>
</dbReference>
<dbReference type="EMBL" id="L26337">
    <property type="protein sequence ID" value="AAA22812.1"/>
    <property type="molecule type" value="Genomic_DNA"/>
</dbReference>
<dbReference type="PIR" id="B69676">
    <property type="entry name" value="B69676"/>
</dbReference>
<dbReference type="RefSeq" id="NP_388822.2">
    <property type="nucleotide sequence ID" value="NC_000964.3"/>
</dbReference>
<dbReference type="RefSeq" id="WP_010886458.1">
    <property type="nucleotide sequence ID" value="NZ_OZ025638.1"/>
</dbReference>
<dbReference type="SMR" id="P19406"/>
<dbReference type="FunCoup" id="P19406">
    <property type="interactions" value="330"/>
</dbReference>
<dbReference type="STRING" id="224308.BSU09410"/>
<dbReference type="PaxDb" id="224308-BSU09410"/>
<dbReference type="EnsemblBacteria" id="CAB12780">
    <property type="protein sequence ID" value="CAB12780"/>
    <property type="gene ID" value="BSU_09410"/>
</dbReference>
<dbReference type="GeneID" id="936265"/>
<dbReference type="KEGG" id="bsu:BSU09410"/>
<dbReference type="PATRIC" id="fig|224308.43.peg.983"/>
<dbReference type="eggNOG" id="COG1785">
    <property type="taxonomic scope" value="Bacteria"/>
</dbReference>
<dbReference type="InParanoid" id="P19406"/>
<dbReference type="OrthoDB" id="9794455at2"/>
<dbReference type="PhylomeDB" id="P19406"/>
<dbReference type="BioCyc" id="BSUB:BSU09410-MONOMER"/>
<dbReference type="BRENDA" id="3.1.3.1">
    <property type="organism ID" value="658"/>
</dbReference>
<dbReference type="Proteomes" id="UP000001570">
    <property type="component" value="Chromosome"/>
</dbReference>
<dbReference type="GO" id="GO:0004035">
    <property type="term" value="F:alkaline phosphatase activity"/>
    <property type="evidence" value="ECO:0000318"/>
    <property type="project" value="GO_Central"/>
</dbReference>
<dbReference type="GO" id="GO:0046872">
    <property type="term" value="F:metal ion binding"/>
    <property type="evidence" value="ECO:0007669"/>
    <property type="project" value="UniProtKB-KW"/>
</dbReference>
<dbReference type="CDD" id="cd16012">
    <property type="entry name" value="ALP"/>
    <property type="match status" value="1"/>
</dbReference>
<dbReference type="Gene3D" id="1.10.60.40">
    <property type="match status" value="1"/>
</dbReference>
<dbReference type="Gene3D" id="3.40.720.10">
    <property type="entry name" value="Alkaline Phosphatase, subunit A"/>
    <property type="match status" value="1"/>
</dbReference>
<dbReference type="InterPro" id="IPR001952">
    <property type="entry name" value="Alkaline_phosphatase"/>
</dbReference>
<dbReference type="InterPro" id="IPR018299">
    <property type="entry name" value="Alkaline_phosphatase_AS"/>
</dbReference>
<dbReference type="InterPro" id="IPR017850">
    <property type="entry name" value="Alkaline_phosphatase_core_sf"/>
</dbReference>
<dbReference type="PANTHER" id="PTHR11596">
    <property type="entry name" value="ALKALINE PHOSPHATASE"/>
    <property type="match status" value="1"/>
</dbReference>
<dbReference type="PANTHER" id="PTHR11596:SF5">
    <property type="entry name" value="ALKALINE PHOSPHATASE"/>
    <property type="match status" value="1"/>
</dbReference>
<dbReference type="Pfam" id="PF00245">
    <property type="entry name" value="Alk_phosphatase"/>
    <property type="match status" value="1"/>
</dbReference>
<dbReference type="PRINTS" id="PR00113">
    <property type="entry name" value="ALKPHPHTASE"/>
</dbReference>
<dbReference type="SMART" id="SM00098">
    <property type="entry name" value="alkPPc"/>
    <property type="match status" value="1"/>
</dbReference>
<dbReference type="SUPFAM" id="SSF53649">
    <property type="entry name" value="Alkaline phosphatase-like"/>
    <property type="match status" value="1"/>
</dbReference>
<dbReference type="PROSITE" id="PS00123">
    <property type="entry name" value="ALKALINE_PHOSPHATASE"/>
    <property type="match status" value="1"/>
</dbReference>
<reference key="1">
    <citation type="journal article" date="1994" name="J. Bacteriol.">
        <title>Sequential action of two-component genetic switches regulates the PHO regulon in Bacillus subtilis.</title>
        <authorList>
            <person name="Hulett F.M."/>
            <person name="Lee J."/>
            <person name="Shi L."/>
            <person name="Sun G."/>
            <person name="Chesnut R."/>
            <person name="Sharkova E."/>
            <person name="Duggan M.F."/>
            <person name="Kapp N."/>
        </authorList>
    </citation>
    <scope>NUCLEOTIDE SEQUENCE [GENOMIC DNA]</scope>
    <source>
        <strain>168 / JH642</strain>
    </source>
</reference>
<reference key="2">
    <citation type="journal article" date="1998" name="Microbiology">
        <title>The 172 kb prkA-addAB region from 83 degrees to 97 degrees of the Bacillus subtilis chromosome contains several dysfunctional genes, the glyB marker, many genes encoding transporter proteins, and the ubiquitous hit gene.</title>
        <authorList>
            <person name="Noback M.A."/>
            <person name="Holsappel S."/>
            <person name="Kiewiet R."/>
            <person name="Terpstra P."/>
            <person name="Wambutt R."/>
            <person name="Wedler H."/>
            <person name="Venema G."/>
            <person name="Bron S."/>
        </authorList>
    </citation>
    <scope>NUCLEOTIDE SEQUENCE [GENOMIC DNA]</scope>
    <source>
        <strain>168</strain>
    </source>
</reference>
<reference key="3">
    <citation type="journal article" date="1997" name="Nature">
        <title>The complete genome sequence of the Gram-positive bacterium Bacillus subtilis.</title>
        <authorList>
            <person name="Kunst F."/>
            <person name="Ogasawara N."/>
            <person name="Moszer I."/>
            <person name="Albertini A.M."/>
            <person name="Alloni G."/>
            <person name="Azevedo V."/>
            <person name="Bertero M.G."/>
            <person name="Bessieres P."/>
            <person name="Bolotin A."/>
            <person name="Borchert S."/>
            <person name="Borriss R."/>
            <person name="Boursier L."/>
            <person name="Brans A."/>
            <person name="Braun M."/>
            <person name="Brignell S.C."/>
            <person name="Bron S."/>
            <person name="Brouillet S."/>
            <person name="Bruschi C.V."/>
            <person name="Caldwell B."/>
            <person name="Capuano V."/>
            <person name="Carter N.M."/>
            <person name="Choi S.-K."/>
            <person name="Codani J.-J."/>
            <person name="Connerton I.F."/>
            <person name="Cummings N.J."/>
            <person name="Daniel R.A."/>
            <person name="Denizot F."/>
            <person name="Devine K.M."/>
            <person name="Duesterhoeft A."/>
            <person name="Ehrlich S.D."/>
            <person name="Emmerson P.T."/>
            <person name="Entian K.-D."/>
            <person name="Errington J."/>
            <person name="Fabret C."/>
            <person name="Ferrari E."/>
            <person name="Foulger D."/>
            <person name="Fritz C."/>
            <person name="Fujita M."/>
            <person name="Fujita Y."/>
            <person name="Fuma S."/>
            <person name="Galizzi A."/>
            <person name="Galleron N."/>
            <person name="Ghim S.-Y."/>
            <person name="Glaser P."/>
            <person name="Goffeau A."/>
            <person name="Golightly E.J."/>
            <person name="Grandi G."/>
            <person name="Guiseppi G."/>
            <person name="Guy B.J."/>
            <person name="Haga K."/>
            <person name="Haiech J."/>
            <person name="Harwood C.R."/>
            <person name="Henaut A."/>
            <person name="Hilbert H."/>
            <person name="Holsappel S."/>
            <person name="Hosono S."/>
            <person name="Hullo M.-F."/>
            <person name="Itaya M."/>
            <person name="Jones L.-M."/>
            <person name="Joris B."/>
            <person name="Karamata D."/>
            <person name="Kasahara Y."/>
            <person name="Klaerr-Blanchard M."/>
            <person name="Klein C."/>
            <person name="Kobayashi Y."/>
            <person name="Koetter P."/>
            <person name="Koningstein G."/>
            <person name="Krogh S."/>
            <person name="Kumano M."/>
            <person name="Kurita K."/>
            <person name="Lapidus A."/>
            <person name="Lardinois S."/>
            <person name="Lauber J."/>
            <person name="Lazarevic V."/>
            <person name="Lee S.-M."/>
            <person name="Levine A."/>
            <person name="Liu H."/>
            <person name="Masuda S."/>
            <person name="Mauel C."/>
            <person name="Medigue C."/>
            <person name="Medina N."/>
            <person name="Mellado R.P."/>
            <person name="Mizuno M."/>
            <person name="Moestl D."/>
            <person name="Nakai S."/>
            <person name="Noback M."/>
            <person name="Noone D."/>
            <person name="O'Reilly M."/>
            <person name="Ogawa K."/>
            <person name="Ogiwara A."/>
            <person name="Oudega B."/>
            <person name="Park S.-H."/>
            <person name="Parro V."/>
            <person name="Pohl T.M."/>
            <person name="Portetelle D."/>
            <person name="Porwollik S."/>
            <person name="Prescott A.M."/>
            <person name="Presecan E."/>
            <person name="Pujic P."/>
            <person name="Purnelle B."/>
            <person name="Rapoport G."/>
            <person name="Rey M."/>
            <person name="Reynolds S."/>
            <person name="Rieger M."/>
            <person name="Rivolta C."/>
            <person name="Rocha E."/>
            <person name="Roche B."/>
            <person name="Rose M."/>
            <person name="Sadaie Y."/>
            <person name="Sato T."/>
            <person name="Scanlan E."/>
            <person name="Schleich S."/>
            <person name="Schroeter R."/>
            <person name="Scoffone F."/>
            <person name="Sekiguchi J."/>
            <person name="Sekowska A."/>
            <person name="Seror S.J."/>
            <person name="Serror P."/>
            <person name="Shin B.-S."/>
            <person name="Soldo B."/>
            <person name="Sorokin A."/>
            <person name="Tacconi E."/>
            <person name="Takagi T."/>
            <person name="Takahashi H."/>
            <person name="Takemaru K."/>
            <person name="Takeuchi M."/>
            <person name="Tamakoshi A."/>
            <person name="Tanaka T."/>
            <person name="Terpstra P."/>
            <person name="Tognoni A."/>
            <person name="Tosato V."/>
            <person name="Uchiyama S."/>
            <person name="Vandenbol M."/>
            <person name="Vannier F."/>
            <person name="Vassarotti A."/>
            <person name="Viari A."/>
            <person name="Wambutt R."/>
            <person name="Wedler E."/>
            <person name="Wedler H."/>
            <person name="Weitzenegger T."/>
            <person name="Winters P."/>
            <person name="Wipat A."/>
            <person name="Yamamoto H."/>
            <person name="Yamane K."/>
            <person name="Yasumoto K."/>
            <person name="Yata K."/>
            <person name="Yoshida K."/>
            <person name="Yoshikawa H.-F."/>
            <person name="Zumstein E."/>
            <person name="Yoshikawa H."/>
            <person name="Danchin A."/>
        </authorList>
    </citation>
    <scope>NUCLEOTIDE SEQUENCE [LARGE SCALE GENOMIC DNA]</scope>
    <source>
        <strain>168</strain>
    </source>
</reference>
<reference key="4">
    <citation type="journal article" date="2009" name="Microbiology">
        <title>From a consortium sequence to a unified sequence: the Bacillus subtilis 168 reference genome a decade later.</title>
        <authorList>
            <person name="Barbe V."/>
            <person name="Cruveiller S."/>
            <person name="Kunst F."/>
            <person name="Lenoble P."/>
            <person name="Meurice G."/>
            <person name="Sekowska A."/>
            <person name="Vallenet D."/>
            <person name="Wang T."/>
            <person name="Moszer I."/>
            <person name="Medigue C."/>
            <person name="Danchin A."/>
        </authorList>
    </citation>
    <scope>SEQUENCE REVISION TO 208</scope>
</reference>
<reference key="5">
    <citation type="journal article" date="1991" name="J. Biol. Chem.">
        <title>Bacillus subtilis alkaline phosphatases III and IV. Cloning, sequencing, and comparisons of deduced amino acid sequence with Escherichia coli alkaline phosphatase three-dimensional structure.</title>
        <authorList>
            <person name="Hulett F.M."/>
            <person name="Kim M.E."/>
            <person name="Bookstein C."/>
            <person name="Kapp N.V."/>
            <person name="Edwards C.W."/>
            <person name="Wyckoff H.W."/>
        </authorList>
    </citation>
    <scope>NUCLEOTIDE SEQUENCE [GENOMIC DNA] OF 39-461</scope>
    <source>
        <strain>168 / JH642</strain>
    </source>
</reference>
<reference key="6">
    <citation type="journal article" date="1990" name="Gene">
        <title>The Bacillus subtilis phoAIV gene: effects of in vitro inactivation on total alkaline phosphatase production.</title>
        <authorList>
            <person name="Kapp N.V."/>
            <person name="Edwards C.W."/>
            <person name="Chesnut R.S."/>
            <person name="Hulett F.M."/>
        </authorList>
    </citation>
    <scope>NUCLEOTIDE SEQUENCE [GENOMIC DNA] OF 39-142</scope>
    <source>
        <strain>168 / JH642</strain>
    </source>
</reference>
<reference key="7">
    <citation type="journal article" date="1990" name="J. Bacteriol.">
        <title>Evidence for two structural genes for alkaline phosphatase in Bacillus subtilis.</title>
        <authorList>
            <person name="Hulett F.M."/>
            <person name="Bookstein C."/>
            <person name="Jensen K."/>
        </authorList>
    </citation>
    <scope>PROTEIN SEQUENCE OF 42-63</scope>
</reference>
<reference key="8">
    <citation type="journal article" date="1994" name="J. Bacteriol.">
        <title>Cloning and characterization of spoVR, a gene from Bacillus subtilis involved in spore cortex formation.</title>
        <authorList>
            <person name="Beall B.W."/>
            <person name="Moran C.P. Jr."/>
        </authorList>
    </citation>
    <scope>NUCLEOTIDE SEQUENCE [GENOMIC DNA] OF 433-461</scope>
    <source>
        <strain>168 / Marburg / ATCC 6051 / DSM 10 / JCM 1465 / NBRC 13719 / NCIMB 3610 / NRRL NRS-744 / VKM B-501</strain>
    </source>
</reference>
<comment type="catalytic activity">
    <reaction evidence="2">
        <text>a phosphate monoester + H2O = an alcohol + phosphate</text>
        <dbReference type="Rhea" id="RHEA:15017"/>
        <dbReference type="ChEBI" id="CHEBI:15377"/>
        <dbReference type="ChEBI" id="CHEBI:30879"/>
        <dbReference type="ChEBI" id="CHEBI:43474"/>
        <dbReference type="ChEBI" id="CHEBI:67140"/>
        <dbReference type="EC" id="3.1.3.1"/>
    </reaction>
</comment>
<comment type="cofactor">
    <cofactor>
        <name>Mg(2+)</name>
        <dbReference type="ChEBI" id="CHEBI:18420"/>
    </cofactor>
    <text>Binds 1 Mg(2+) ion.</text>
</comment>
<comment type="cofactor">
    <cofactor>
        <name>Zn(2+)</name>
        <dbReference type="ChEBI" id="CHEBI:29105"/>
    </cofactor>
    <text>Binds 2 Zn(2+) ions.</text>
</comment>
<comment type="subunit">
    <text>Monomer.</text>
</comment>
<comment type="similarity">
    <text evidence="4">Belongs to the alkaline phosphatase family.</text>
</comment>
<organism>
    <name type="scientific">Bacillus subtilis (strain 168)</name>
    <dbReference type="NCBI Taxonomy" id="224308"/>
    <lineage>
        <taxon>Bacteria</taxon>
        <taxon>Bacillati</taxon>
        <taxon>Bacillota</taxon>
        <taxon>Bacilli</taxon>
        <taxon>Bacillales</taxon>
        <taxon>Bacillaceae</taxon>
        <taxon>Bacillus</taxon>
    </lineage>
</organism>
<accession>P19406</accession>
<evidence type="ECO:0000250" key="1"/>
<evidence type="ECO:0000255" key="2">
    <source>
        <dbReference type="PROSITE-ProRule" id="PRU10042"/>
    </source>
</evidence>
<evidence type="ECO:0000269" key="3">
    <source>
    </source>
</evidence>
<evidence type="ECO:0000305" key="4"/>